<protein>
    <recommendedName>
        <fullName evidence="1">Large ribosomal subunit protein uL14</fullName>
    </recommendedName>
    <alternativeName>
        <fullName evidence="2">50S ribosomal protein L14</fullName>
    </alternativeName>
</protein>
<accession>Q31VW6</accession>
<evidence type="ECO:0000255" key="1">
    <source>
        <dbReference type="HAMAP-Rule" id="MF_01367"/>
    </source>
</evidence>
<evidence type="ECO:0000305" key="2"/>
<proteinExistence type="inferred from homology"/>
<comment type="function">
    <text evidence="1">Binds to 23S rRNA. Forms part of two intersubunit bridges in the 70S ribosome.</text>
</comment>
<comment type="subunit">
    <text evidence="1">Part of the 50S ribosomal subunit. Forms a cluster with proteins L3 and L19. In the 70S ribosome, L14 and L19 interact and together make contacts with the 16S rRNA in bridges B5 and B8.</text>
</comment>
<comment type="similarity">
    <text evidence="1">Belongs to the universal ribosomal protein uL14 family.</text>
</comment>
<organism>
    <name type="scientific">Shigella boydii serotype 4 (strain Sb227)</name>
    <dbReference type="NCBI Taxonomy" id="300268"/>
    <lineage>
        <taxon>Bacteria</taxon>
        <taxon>Pseudomonadati</taxon>
        <taxon>Pseudomonadota</taxon>
        <taxon>Gammaproteobacteria</taxon>
        <taxon>Enterobacterales</taxon>
        <taxon>Enterobacteriaceae</taxon>
        <taxon>Shigella</taxon>
    </lineage>
</organism>
<name>RL14_SHIBS</name>
<sequence length="123" mass="13541">MIQEQTMLNVADNSGARRVMCIKVLGGSHRRYAGVGDIIKITIKEAIPRGKVKKGDVLKAVVVRTKKGVRRPDGSVIRFDGNACVLLNNNSEQPIGTRIFGPVTRELRSEKFMKIISLAPEVL</sequence>
<reference key="1">
    <citation type="journal article" date="2005" name="Nucleic Acids Res.">
        <title>Genome dynamics and diversity of Shigella species, the etiologic agents of bacillary dysentery.</title>
        <authorList>
            <person name="Yang F."/>
            <person name="Yang J."/>
            <person name="Zhang X."/>
            <person name="Chen L."/>
            <person name="Jiang Y."/>
            <person name="Yan Y."/>
            <person name="Tang X."/>
            <person name="Wang J."/>
            <person name="Xiong Z."/>
            <person name="Dong J."/>
            <person name="Xue Y."/>
            <person name="Zhu Y."/>
            <person name="Xu X."/>
            <person name="Sun L."/>
            <person name="Chen S."/>
            <person name="Nie H."/>
            <person name="Peng J."/>
            <person name="Xu J."/>
            <person name="Wang Y."/>
            <person name="Yuan Z."/>
            <person name="Wen Y."/>
            <person name="Yao Z."/>
            <person name="Shen Y."/>
            <person name="Qiang B."/>
            <person name="Hou Y."/>
            <person name="Yu J."/>
            <person name="Jin Q."/>
        </authorList>
    </citation>
    <scope>NUCLEOTIDE SEQUENCE [LARGE SCALE GENOMIC DNA]</scope>
    <source>
        <strain>Sb227</strain>
    </source>
</reference>
<dbReference type="EMBL" id="CP000036">
    <property type="protein sequence ID" value="ABB67792.1"/>
    <property type="molecule type" value="Genomic_DNA"/>
</dbReference>
<dbReference type="RefSeq" id="WP_000613955.1">
    <property type="nucleotide sequence ID" value="NC_007613.1"/>
</dbReference>
<dbReference type="SMR" id="Q31VW6"/>
<dbReference type="GeneID" id="93778677"/>
<dbReference type="KEGG" id="sbo:SBO_3304"/>
<dbReference type="HOGENOM" id="CLU_095071_2_1_6"/>
<dbReference type="Proteomes" id="UP000007067">
    <property type="component" value="Chromosome"/>
</dbReference>
<dbReference type="GO" id="GO:0022625">
    <property type="term" value="C:cytosolic large ribosomal subunit"/>
    <property type="evidence" value="ECO:0007669"/>
    <property type="project" value="TreeGrafter"/>
</dbReference>
<dbReference type="GO" id="GO:0070180">
    <property type="term" value="F:large ribosomal subunit rRNA binding"/>
    <property type="evidence" value="ECO:0007669"/>
    <property type="project" value="TreeGrafter"/>
</dbReference>
<dbReference type="GO" id="GO:0003735">
    <property type="term" value="F:structural constituent of ribosome"/>
    <property type="evidence" value="ECO:0007669"/>
    <property type="project" value="InterPro"/>
</dbReference>
<dbReference type="GO" id="GO:0006412">
    <property type="term" value="P:translation"/>
    <property type="evidence" value="ECO:0007669"/>
    <property type="project" value="UniProtKB-UniRule"/>
</dbReference>
<dbReference type="CDD" id="cd00337">
    <property type="entry name" value="Ribosomal_uL14"/>
    <property type="match status" value="1"/>
</dbReference>
<dbReference type="FunFam" id="2.40.150.20:FF:000001">
    <property type="entry name" value="50S ribosomal protein L14"/>
    <property type="match status" value="1"/>
</dbReference>
<dbReference type="Gene3D" id="2.40.150.20">
    <property type="entry name" value="Ribosomal protein L14"/>
    <property type="match status" value="1"/>
</dbReference>
<dbReference type="HAMAP" id="MF_01367">
    <property type="entry name" value="Ribosomal_uL14"/>
    <property type="match status" value="1"/>
</dbReference>
<dbReference type="InterPro" id="IPR000218">
    <property type="entry name" value="Ribosomal_uL14"/>
</dbReference>
<dbReference type="InterPro" id="IPR005745">
    <property type="entry name" value="Ribosomal_uL14_bac-type"/>
</dbReference>
<dbReference type="InterPro" id="IPR019972">
    <property type="entry name" value="Ribosomal_uL14_CS"/>
</dbReference>
<dbReference type="InterPro" id="IPR036853">
    <property type="entry name" value="Ribosomal_uL14_sf"/>
</dbReference>
<dbReference type="NCBIfam" id="TIGR01067">
    <property type="entry name" value="rplN_bact"/>
    <property type="match status" value="1"/>
</dbReference>
<dbReference type="PANTHER" id="PTHR11761">
    <property type="entry name" value="50S/60S RIBOSOMAL PROTEIN L14/L23"/>
    <property type="match status" value="1"/>
</dbReference>
<dbReference type="PANTHER" id="PTHR11761:SF3">
    <property type="entry name" value="LARGE RIBOSOMAL SUBUNIT PROTEIN UL14M"/>
    <property type="match status" value="1"/>
</dbReference>
<dbReference type="Pfam" id="PF00238">
    <property type="entry name" value="Ribosomal_L14"/>
    <property type="match status" value="1"/>
</dbReference>
<dbReference type="SMART" id="SM01374">
    <property type="entry name" value="Ribosomal_L14"/>
    <property type="match status" value="1"/>
</dbReference>
<dbReference type="SUPFAM" id="SSF50193">
    <property type="entry name" value="Ribosomal protein L14"/>
    <property type="match status" value="1"/>
</dbReference>
<dbReference type="PROSITE" id="PS00049">
    <property type="entry name" value="RIBOSOMAL_L14"/>
    <property type="match status" value="1"/>
</dbReference>
<feature type="chain" id="PRO_0000266560" description="Large ribosomal subunit protein uL14">
    <location>
        <begin position="1"/>
        <end position="123"/>
    </location>
</feature>
<gene>
    <name evidence="1" type="primary">rplN</name>
    <name type="ordered locus">SBO_3304</name>
</gene>
<keyword id="KW-0687">Ribonucleoprotein</keyword>
<keyword id="KW-0689">Ribosomal protein</keyword>
<keyword id="KW-0694">RNA-binding</keyword>
<keyword id="KW-0699">rRNA-binding</keyword>